<name>MAMA_PARM1</name>
<protein>
    <recommendedName>
        <fullName evidence="13">Magnetosome protein MamA</fullName>
    </recommendedName>
</protein>
<reference key="1">
    <citation type="journal article" date="2004" name="Proc. Natl. Acad. Sci. U.S.A.">
        <title>Magnetosome vesicles are present before magnetite formation, and MamA is required for their activation.</title>
        <authorList>
            <person name="Komeili A."/>
            <person name="Vali H."/>
            <person name="Beveridge T.J."/>
            <person name="Newman D.K."/>
        </authorList>
    </citation>
    <scope>NUCLEOTIDE SEQUENCE [GENOMIC DNA]</scope>
    <scope>FUNCTION</scope>
    <scope>SUBCELLULAR LOCATION</scope>
    <scope>DISRUPTION PHENOTYPE</scope>
    <source>
        <strain>ATCC 700264 / AMB-1</strain>
    </source>
</reference>
<reference key="2">
    <citation type="journal article" date="2005" name="DNA Res.">
        <title>Complete genome sequence of the facultative anaerobic magnetotactic bacterium Magnetospirillum sp. strain AMB-1.</title>
        <authorList>
            <person name="Matsunaga T."/>
            <person name="Okamura Y."/>
            <person name="Fukuda Y."/>
            <person name="Wahyudi A.T."/>
            <person name="Murase Y."/>
            <person name="Takeyama H."/>
        </authorList>
    </citation>
    <scope>NUCLEOTIDE SEQUENCE [LARGE SCALE GENOMIC DNA]</scope>
    <scope>SUBCELLULAR LOCATION</scope>
    <source>
        <strain>ATCC 700264 / AMB-1</strain>
    </source>
</reference>
<reference key="3">
    <citation type="journal article" date="2010" name="Proc. Natl. Acad. Sci. U.S.A.">
        <title>Comprehensive genetic dissection of the magnetosome gene island reveals the step-wise assembly of a prokaryotic organelle.</title>
        <authorList>
            <person name="Murat D."/>
            <person name="Quinlan A."/>
            <person name="Vali H."/>
            <person name="Komeili A."/>
        </authorList>
    </citation>
    <scope>SUBCELLULAR LOCATION</scope>
    <scope>PROBABLE OPERON</scope>
    <scope>DISRUPTION PHENOTYPE</scope>
    <source>
        <strain>ATCC 700264 / AMB-1</strain>
    </source>
</reference>
<reference key="4">
    <citation type="journal article" date="2010" name="Proc. Natl. Acad. Sci. U.S.A.">
        <title>Visualization and structural analysis of the bacterial magnetic organelle magnetosome using atomic force microscopy.</title>
        <authorList>
            <person name="Yamamoto D."/>
            <person name="Taoka A."/>
            <person name="Uchihashi T."/>
            <person name="Sasaki H."/>
            <person name="Watanabe H."/>
            <person name="Ando T."/>
            <person name="Fukumori Y."/>
        </authorList>
    </citation>
    <scope>SUBUNIT</scope>
    <scope>SUBCELLULAR LOCATION</scope>
    <scope>DISRUPTION PHENOTYPE</scope>
    <source>
        <strain>ATCC 700264 / AMB-1</strain>
    </source>
</reference>
<reference key="5">
    <citation type="journal article" date="2012" name="Mol. Microbiol.">
        <title>The magnetosome membrane protein, MmsF, is a major regulator of magnetite biomineralization in Magnetospirillum magneticum AMB-1.</title>
        <authorList>
            <person name="Murat D."/>
            <person name="Falahati V."/>
            <person name="Bertinetti L."/>
            <person name="Csencsits R."/>
            <person name="Koernig A."/>
            <person name="Downing K."/>
            <person name="Faivre D."/>
            <person name="Komeili A."/>
        </authorList>
    </citation>
    <scope>MINIMAL MAGNETOSOME ISLAND</scope>
    <source>
        <strain>ATCC 700264 / AMB-1</strain>
    </source>
</reference>
<reference key="6">
    <citation type="journal article" date="2014" name="FEMS Microbiol. Lett.">
        <title>A magnetosome-associated cytochrome MamP is critical for magnetite crystal growth during the exponential growth phase.</title>
        <authorList>
            <person name="Taoka A."/>
            <person name="Eguchi Y."/>
            <person name="Mise S."/>
            <person name="Oestreicher Z."/>
            <person name="Uno F."/>
            <person name="Fukumori Y."/>
        </authorList>
    </citation>
    <scope>INDUCTION</scope>
    <source>
        <strain>ATCC 700264 / AMB-1</strain>
    </source>
</reference>
<reference key="7">
    <citation type="journal article" date="2016" name="Biochem. Biophys. Rep.">
        <title>A protein-protein interaction in magnetosomes: TPR protein MamA interacts with an Mms6 protein.</title>
        <authorList>
            <person name="Nguyen H.V."/>
            <person name="Suzuki E."/>
            <person name="Oestreicher Z."/>
            <person name="Minamide H."/>
            <person name="Endoh H."/>
            <person name="Fukumori Y."/>
            <person name="Taoka A."/>
        </authorList>
    </citation>
    <scope>INTERACTION WITH MMS6</scope>
    <scope>SUBCELLULAR LOCATION</scope>
    <source>
        <strain>ATCC 700264 / AMB-1</strain>
    </source>
</reference>
<reference evidence="16 17 18 19 20" key="8">
    <citation type="journal article" date="2011" name="Proc. Natl. Acad. Sci. U.S.A.">
        <title>Self-recognition mechanism of MamA, a magnetosome-associated TPR-containing protein, promotes complex assembly.</title>
        <authorList>
            <person name="Zeytuni N."/>
            <person name="Ozyamak E."/>
            <person name="Ben-Harush K."/>
            <person name="Davidov G."/>
            <person name="Levin M."/>
            <person name="Gat Y."/>
            <person name="Moyal T."/>
            <person name="Brik A."/>
            <person name="Komeili A."/>
            <person name="Zarivach R."/>
        </authorList>
    </citation>
    <scope>X-RAY CRYSTALLOGRAPHY (2.00 ANGSTROMS) OF 37-213</scope>
    <scope>POSSIBLE FUNCTION</scope>
    <scope>SUBUNIT</scope>
    <scope>SUBCELLULAR LOCATION</scope>
    <scope>DOMAIN</scope>
    <scope>MUTAGENESIS OF 1-MET--ASN-41; 1-MET--LEU-26 AND ARG-50</scope>
    <source>
        <strain>ATCC 700264 / AMB-1</strain>
    </source>
</reference>
<feature type="chain" id="PRO_0000447733" description="Magnetosome protein MamA">
    <location>
        <begin position="1"/>
        <end position="217"/>
    </location>
</feature>
<feature type="repeat" description="TPR 1" evidence="15">
    <location>
        <begin position="12"/>
        <end position="44"/>
    </location>
</feature>
<feature type="repeat" description="TPR 2" evidence="2">
    <location>
        <begin position="46"/>
        <end position="79"/>
    </location>
</feature>
<feature type="repeat" description="TPR 3" evidence="2">
    <location>
        <begin position="80"/>
        <end position="113"/>
    </location>
</feature>
<feature type="repeat" description="TPR 4" evidence="2">
    <location>
        <begin position="114"/>
        <end position="147"/>
    </location>
</feature>
<feature type="repeat" description="TPR 5" evidence="2">
    <location>
        <begin position="148"/>
        <end position="181"/>
    </location>
</feature>
<feature type="repeat" description="TPR 6" evidence="2">
    <location>
        <begin position="182"/>
        <end position="215"/>
    </location>
</feature>
<feature type="region of interest" description="N-terminal domain (NTD)" evidence="15">
    <location>
        <begin position="41"/>
        <end position="112"/>
    </location>
</feature>
<feature type="region of interest" description="C-terminal domain (CTD)" evidence="15">
    <location>
        <begin position="113"/>
        <end position="217"/>
    </location>
</feature>
<feature type="site" description="Salt bridge that stabilizes NTD" evidence="15">
    <location>
        <position position="50"/>
    </location>
</feature>
<feature type="site" description="Salt bridge that stabilizes NTD" evidence="15">
    <location>
        <position position="79"/>
    </location>
</feature>
<feature type="mutagenesis site" description="No longer forms homooligomeric complexes, no longer associates with magnetosomes." evidence="7">
    <location>
        <begin position="1"/>
        <end position="41"/>
    </location>
</feature>
<feature type="mutagenesis site" description="No longer associates with magnetosomes, protein is unstable." evidence="7">
    <location>
        <begin position="1"/>
        <end position="26"/>
    </location>
</feature>
<feature type="mutagenesis site" description="Protein no longer associates with magnetosomes, no longer forms homooligomeric complexes, a crystal of 41-217 has a large rotation of the NTD." evidence="7">
    <original>R</original>
    <variation>E</variation>
    <location>
        <position position="50"/>
    </location>
</feature>
<feature type="helix" evidence="21">
    <location>
        <begin position="44"/>
        <end position="59"/>
    </location>
</feature>
<feature type="helix" evidence="21">
    <location>
        <begin position="62"/>
        <end position="69"/>
    </location>
</feature>
<feature type="turn" evidence="21">
    <location>
        <begin position="70"/>
        <end position="72"/>
    </location>
</feature>
<feature type="strand" evidence="22">
    <location>
        <begin position="75"/>
        <end position="77"/>
    </location>
</feature>
<feature type="helix" evidence="21">
    <location>
        <begin position="80"/>
        <end position="92"/>
    </location>
</feature>
<feature type="helix" evidence="21">
    <location>
        <begin position="96"/>
        <end position="109"/>
    </location>
</feature>
<feature type="helix" evidence="21">
    <location>
        <begin position="114"/>
        <end position="127"/>
    </location>
</feature>
<feature type="helix" evidence="21">
    <location>
        <begin position="130"/>
        <end position="143"/>
    </location>
</feature>
<feature type="helix" evidence="21">
    <location>
        <begin position="148"/>
        <end position="160"/>
    </location>
</feature>
<feature type="helix" evidence="21">
    <location>
        <begin position="164"/>
        <end position="177"/>
    </location>
</feature>
<feature type="helix" evidence="21">
    <location>
        <begin position="182"/>
        <end position="194"/>
    </location>
</feature>
<feature type="helix" evidence="21">
    <location>
        <begin position="198"/>
        <end position="213"/>
    </location>
</feature>
<sequence length="217" mass="23976">MSSKPSDILDEVTLYAHYGLSVAKKLGMNMVDAFRAAFSVNDDIRQVYYRDKGISHAKAGRYSQAVMLLEQVYDADAFDVDVALHLGIAYVKTGAVDRGTELLERSLADAPDNVKVATVLGLTYVQVQKYDLAVPLLIKVAEANPINFNVRFRLGVALDNLGRFDEAIDSFKIALGLRPNEGKVHRAIAFSYEQMGRHEEALPHFKKANELDEGASV</sequence>
<comment type="function">
    <text evidence="3 15">Probably forms a large homooligomer on which other magnetosome subunits assemble (Probable). Required for formation of functional magnetosomes from pre-existing vesicles, it has a dynamic location in the cell (PubMed:15004275).</text>
</comment>
<comment type="subunit">
    <text evidence="1 6 7 10">Oligomerizes into high molecular weight complexes (at least 560 kDa) (PubMed:20439702, PubMed:28955887). Forms round, 20 nm diameter complexes with a central cavity (PubMed:21784982). Interacts with full-length Mms6 (PubMed:28955887). Probably binds MamC (By similarity).</text>
</comment>
<comment type="subcellular location">
    <subcellularLocation>
        <location evidence="3 4 5 6 7 10">Magnetosome membrane</location>
        <topology evidence="6 10">Peripheral membrane protein</topology>
    </subcellularLocation>
    <text evidence="3 6 7">Reversibly binds to magnetosomes (PubMed:20439702). Forms oligomers that cover the surface of the magnetosome (PubMed:20439702). Its location is dynamic; in log phase cells tagged protein extends from one pole to the other, which is longer than the magnetosome chain and is occasionally associated with the inner membrane. In stationary phase it forms 3-4 spots in the cell (PubMed:15004275, PubMed:21784982).</text>
</comment>
<comment type="induction">
    <text evidence="9 14">Constitutively expressed, levels remain the same over 144 hours of growth (at protein level) (PubMed:25048532). Part of the probable 18 gene mamAB operon (Probable).</text>
</comment>
<comment type="domain">
    <text evidence="7">Protein missing TPR1 (residues 1-41) forms an N-terminal domain of TPR 2-3 and a C-terminal domain with TPR 4-6 which can move with respect to each other, hinged at D-112.</text>
</comment>
<comment type="disruption phenotype">
    <text evidence="3 5 6">Takes up less Fe(3+) than wild-type cells, is less responsive to magnetic field, cells have 1-5 magnetosomes (compared to 8-14 in wild-type). Cells have chains of empty vesicles (PubMed:15004275). Magnetosomes are slightly further apart than in wild-type (PubMed:20439702). Deletion of genes mamH to mamV (amb0961 to amb0978) gives cells with no magnetosomes and no magnetic response (PubMed:20212111).</text>
</comment>
<comment type="miscellaneous">
    <text evidence="13">This bacteria makes up to 20 cubo-octahedral magnetosomes of about 45 nm in diameter which contain membrane-bound crystals of magnetite (Fe(3)O(4)).</text>
</comment>
<comment type="miscellaneous">
    <text evidence="8">Expression of just the minimal mamAB gene cluster (amb0961 to amb0978), including this gene, is sufficient to form a minimal magnetosome chain with small magnetite particles.</text>
</comment>
<comment type="similarity">
    <text evidence="13">Belongs to the magnetosome MamA family.</text>
</comment>
<comment type="sequence caution" evidence="13">
    <conflict type="erroneous initiation">
        <sequence resource="EMBL-CDS" id="BAE49775"/>
    </conflict>
    <text>Extended N-terminus.</text>
</comment>
<keyword id="KW-0002">3D-structure</keyword>
<keyword id="KW-0091">Biomineralization</keyword>
<keyword id="KW-1281">Magnetosome</keyword>
<keyword id="KW-0472">Membrane</keyword>
<keyword id="KW-0677">Repeat</keyword>
<keyword id="KW-0802">TPR repeat</keyword>
<accession>Q2W8Q0</accession>
<accession>Q50224</accession>
<gene>
    <name evidence="11" type="primary">mamA</name>
    <name evidence="12" type="synonym">mms24</name>
    <name type="ordered locus">amb0971</name>
</gene>
<evidence type="ECO:0000250" key="1">
    <source>
        <dbReference type="UniProtKB" id="Q93DY9"/>
    </source>
</evidence>
<evidence type="ECO:0000255" key="2">
    <source>
        <dbReference type="PROSITE-ProRule" id="PRU00339"/>
    </source>
</evidence>
<evidence type="ECO:0000269" key="3">
    <source>
    </source>
</evidence>
<evidence type="ECO:0000269" key="4">
    <source>
    </source>
</evidence>
<evidence type="ECO:0000269" key="5">
    <source>
    </source>
</evidence>
<evidence type="ECO:0000269" key="6">
    <source>
    </source>
</evidence>
<evidence type="ECO:0000269" key="7">
    <source>
    </source>
</evidence>
<evidence type="ECO:0000269" key="8">
    <source>
    </source>
</evidence>
<evidence type="ECO:0000269" key="9">
    <source>
    </source>
</evidence>
<evidence type="ECO:0000269" key="10">
    <source>
    </source>
</evidence>
<evidence type="ECO:0000303" key="11">
    <source>
    </source>
</evidence>
<evidence type="ECO:0000303" key="12">
    <source>
    </source>
</evidence>
<evidence type="ECO:0000305" key="13"/>
<evidence type="ECO:0000305" key="14">
    <source>
    </source>
</evidence>
<evidence type="ECO:0000305" key="15">
    <source>
    </source>
</evidence>
<evidence type="ECO:0007744" key="16">
    <source>
        <dbReference type="PDB" id="3AS4"/>
    </source>
</evidence>
<evidence type="ECO:0007744" key="17">
    <source>
        <dbReference type="PDB" id="3AS5"/>
    </source>
</evidence>
<evidence type="ECO:0007744" key="18">
    <source>
        <dbReference type="PDB" id="3ASD"/>
    </source>
</evidence>
<evidence type="ECO:0007744" key="19">
    <source>
        <dbReference type="PDB" id="3ASG"/>
    </source>
</evidence>
<evidence type="ECO:0007744" key="20">
    <source>
        <dbReference type="PDB" id="3ASH"/>
    </source>
</evidence>
<evidence type="ECO:0007829" key="21">
    <source>
        <dbReference type="PDB" id="3AS5"/>
    </source>
</evidence>
<evidence type="ECO:0007829" key="22">
    <source>
        <dbReference type="PDB" id="3ASG"/>
    </source>
</evidence>
<organism>
    <name type="scientific">Paramagnetospirillum magneticum (strain ATCC 700264 / AMB-1)</name>
    <name type="common">Magnetospirillum magneticum</name>
    <dbReference type="NCBI Taxonomy" id="342108"/>
    <lineage>
        <taxon>Bacteria</taxon>
        <taxon>Pseudomonadati</taxon>
        <taxon>Pseudomonadota</taxon>
        <taxon>Alphaproteobacteria</taxon>
        <taxon>Rhodospirillales</taxon>
        <taxon>Magnetospirillaceae</taxon>
        <taxon>Paramagnetospirillum</taxon>
    </lineage>
</organism>
<dbReference type="EMBL" id="AY508230">
    <property type="protein sequence ID" value="AAR90856.1"/>
    <property type="molecule type" value="Genomic_DNA"/>
</dbReference>
<dbReference type="EMBL" id="AP007255">
    <property type="protein sequence ID" value="BAE49775.1"/>
    <property type="status" value="ALT_INIT"/>
    <property type="molecule type" value="Genomic_DNA"/>
</dbReference>
<dbReference type="PDB" id="3AS4">
    <property type="method" value="X-ray"/>
    <property type="resolution" value="2.33 A"/>
    <property type="chains" value="A=37-213"/>
</dbReference>
<dbReference type="PDB" id="3AS5">
    <property type="method" value="X-ray"/>
    <property type="resolution" value="2.00 A"/>
    <property type="chains" value="A/B=37-213"/>
</dbReference>
<dbReference type="PDB" id="3ASD">
    <property type="method" value="X-ray"/>
    <property type="resolution" value="2.45 A"/>
    <property type="chains" value="A=37-213"/>
</dbReference>
<dbReference type="PDB" id="3ASG">
    <property type="method" value="X-ray"/>
    <property type="resolution" value="2.33 A"/>
    <property type="chains" value="A/B=37-213"/>
</dbReference>
<dbReference type="PDB" id="3ASH">
    <property type="method" value="X-ray"/>
    <property type="resolution" value="2.41 A"/>
    <property type="chains" value="A/B=37-213"/>
</dbReference>
<dbReference type="PDBsum" id="3AS4"/>
<dbReference type="PDBsum" id="3AS5"/>
<dbReference type="PDBsum" id="3ASD"/>
<dbReference type="PDBsum" id="3ASG"/>
<dbReference type="PDBsum" id="3ASH"/>
<dbReference type="SMR" id="Q2W8Q0"/>
<dbReference type="STRING" id="342108.amb0971"/>
<dbReference type="KEGG" id="mag:amb0971"/>
<dbReference type="HOGENOM" id="CLU_1271021_0_0_5"/>
<dbReference type="OrthoDB" id="9800698at2"/>
<dbReference type="EvolutionaryTrace" id="Q2W8Q0"/>
<dbReference type="Proteomes" id="UP000007058">
    <property type="component" value="Chromosome"/>
</dbReference>
<dbReference type="GO" id="GO:0110143">
    <property type="term" value="C:magnetosome"/>
    <property type="evidence" value="ECO:0000314"/>
    <property type="project" value="UniProtKB"/>
</dbReference>
<dbReference type="GO" id="GO:0110146">
    <property type="term" value="C:magnetosome membrane"/>
    <property type="evidence" value="ECO:0007669"/>
    <property type="project" value="UniProtKB-SubCell"/>
</dbReference>
<dbReference type="GO" id="GO:0140923">
    <property type="term" value="P:magnetosome assembly"/>
    <property type="evidence" value="ECO:0000315"/>
    <property type="project" value="UniProtKB"/>
</dbReference>
<dbReference type="FunFam" id="1.25.40.10:FF:001005">
    <property type="entry name" value="Magnetosome protein MamA"/>
    <property type="match status" value="1"/>
</dbReference>
<dbReference type="Gene3D" id="1.25.40.10">
    <property type="entry name" value="Tetratricopeptide repeat domain"/>
    <property type="match status" value="1"/>
</dbReference>
<dbReference type="InterPro" id="IPR011990">
    <property type="entry name" value="TPR-like_helical_dom_sf"/>
</dbReference>
<dbReference type="InterPro" id="IPR019734">
    <property type="entry name" value="TPR_rpt"/>
</dbReference>
<dbReference type="InterPro" id="IPR050498">
    <property type="entry name" value="Ycf3"/>
</dbReference>
<dbReference type="NCBIfam" id="NF040959">
    <property type="entry name" value="MamA"/>
    <property type="match status" value="1"/>
</dbReference>
<dbReference type="PANTHER" id="PTHR44858">
    <property type="entry name" value="TETRATRICOPEPTIDE REPEAT PROTEIN 6"/>
    <property type="match status" value="1"/>
</dbReference>
<dbReference type="PANTHER" id="PTHR44858:SF1">
    <property type="entry name" value="UDP-N-ACETYLGLUCOSAMINE--PEPTIDE N-ACETYLGLUCOSAMINYLTRANSFERASE SPINDLY-RELATED"/>
    <property type="match status" value="1"/>
</dbReference>
<dbReference type="Pfam" id="PF13432">
    <property type="entry name" value="TPR_16"/>
    <property type="match status" value="1"/>
</dbReference>
<dbReference type="Pfam" id="PF14559">
    <property type="entry name" value="TPR_19"/>
    <property type="match status" value="1"/>
</dbReference>
<dbReference type="Pfam" id="PF13181">
    <property type="entry name" value="TPR_8"/>
    <property type="match status" value="1"/>
</dbReference>
<dbReference type="SMART" id="SM00028">
    <property type="entry name" value="TPR"/>
    <property type="match status" value="5"/>
</dbReference>
<dbReference type="SUPFAM" id="SSF48452">
    <property type="entry name" value="TPR-like"/>
    <property type="match status" value="1"/>
</dbReference>
<dbReference type="PROSITE" id="PS50005">
    <property type="entry name" value="TPR"/>
    <property type="match status" value="5"/>
</dbReference>
<dbReference type="PROSITE" id="PS50293">
    <property type="entry name" value="TPR_REGION"/>
    <property type="match status" value="1"/>
</dbReference>
<proteinExistence type="evidence at protein level"/>